<name>ATPF_STRPD</name>
<gene>
    <name evidence="1" type="primary">atpF</name>
    <name type="ordered locus">MGAS10270_Spy0632</name>
</gene>
<proteinExistence type="inferred from homology"/>
<feature type="chain" id="PRO_0000368805" description="ATP synthase subunit b">
    <location>
        <begin position="1"/>
        <end position="164"/>
    </location>
</feature>
<feature type="transmembrane region" description="Helical" evidence="1">
    <location>
        <begin position="6"/>
        <end position="26"/>
    </location>
</feature>
<protein>
    <recommendedName>
        <fullName evidence="1">ATP synthase subunit b</fullName>
    </recommendedName>
    <alternativeName>
        <fullName evidence="1">ATP synthase F(0) sector subunit b</fullName>
    </alternativeName>
    <alternativeName>
        <fullName evidence="1">ATPase subunit I</fullName>
    </alternativeName>
    <alternativeName>
        <fullName evidence="1">F-type ATPase subunit b</fullName>
        <shortName evidence="1">F-ATPase subunit b</shortName>
    </alternativeName>
</protein>
<sequence length="164" mass="17812">MSITFGELVGNFILVTGSVIVLLLLIKKFAWGAIESILQTRSQQISRDIDQAEQSRLSAQQLETKSQANLDASRSQASKIISDAKEIGQLQGDKLVAEATDEAKRLKEKALTDIEQSKSDAISAVKTEMSDLTVLLAEKIMGANLDKTAQSQLIDSYLDDLGEA</sequence>
<dbReference type="EMBL" id="CP000260">
    <property type="protein sequence ID" value="ABF33697.1"/>
    <property type="molecule type" value="Genomic_DNA"/>
</dbReference>
<dbReference type="SMR" id="Q1JHN9"/>
<dbReference type="KEGG" id="sph:MGAS10270_Spy0632"/>
<dbReference type="HOGENOM" id="CLU_079215_4_2_9"/>
<dbReference type="Proteomes" id="UP000002436">
    <property type="component" value="Chromosome"/>
</dbReference>
<dbReference type="GO" id="GO:0005886">
    <property type="term" value="C:plasma membrane"/>
    <property type="evidence" value="ECO:0007669"/>
    <property type="project" value="UniProtKB-SubCell"/>
</dbReference>
<dbReference type="GO" id="GO:0045259">
    <property type="term" value="C:proton-transporting ATP synthase complex"/>
    <property type="evidence" value="ECO:0007669"/>
    <property type="project" value="UniProtKB-KW"/>
</dbReference>
<dbReference type="GO" id="GO:0046933">
    <property type="term" value="F:proton-transporting ATP synthase activity, rotational mechanism"/>
    <property type="evidence" value="ECO:0007669"/>
    <property type="project" value="UniProtKB-UniRule"/>
</dbReference>
<dbReference type="GO" id="GO:0046961">
    <property type="term" value="F:proton-transporting ATPase activity, rotational mechanism"/>
    <property type="evidence" value="ECO:0007669"/>
    <property type="project" value="TreeGrafter"/>
</dbReference>
<dbReference type="CDD" id="cd06503">
    <property type="entry name" value="ATP-synt_Fo_b"/>
    <property type="match status" value="1"/>
</dbReference>
<dbReference type="HAMAP" id="MF_01398">
    <property type="entry name" value="ATP_synth_b_bprime"/>
    <property type="match status" value="1"/>
</dbReference>
<dbReference type="InterPro" id="IPR028987">
    <property type="entry name" value="ATP_synth_B-like_membr_sf"/>
</dbReference>
<dbReference type="InterPro" id="IPR002146">
    <property type="entry name" value="ATP_synth_b/b'su_bac/chlpt"/>
</dbReference>
<dbReference type="InterPro" id="IPR005864">
    <property type="entry name" value="ATP_synth_F0_bsu_bac"/>
</dbReference>
<dbReference type="InterPro" id="IPR050059">
    <property type="entry name" value="ATP_synthase_B_chain"/>
</dbReference>
<dbReference type="NCBIfam" id="TIGR01144">
    <property type="entry name" value="ATP_synt_b"/>
    <property type="match status" value="1"/>
</dbReference>
<dbReference type="PANTHER" id="PTHR33445:SF1">
    <property type="entry name" value="ATP SYNTHASE SUBUNIT B"/>
    <property type="match status" value="1"/>
</dbReference>
<dbReference type="PANTHER" id="PTHR33445">
    <property type="entry name" value="ATP SYNTHASE SUBUNIT B', CHLOROPLASTIC"/>
    <property type="match status" value="1"/>
</dbReference>
<dbReference type="Pfam" id="PF00430">
    <property type="entry name" value="ATP-synt_B"/>
    <property type="match status" value="1"/>
</dbReference>
<dbReference type="SUPFAM" id="SSF81573">
    <property type="entry name" value="F1F0 ATP synthase subunit B, membrane domain"/>
    <property type="match status" value="1"/>
</dbReference>
<organism>
    <name type="scientific">Streptococcus pyogenes serotype M2 (strain MGAS10270)</name>
    <dbReference type="NCBI Taxonomy" id="370552"/>
    <lineage>
        <taxon>Bacteria</taxon>
        <taxon>Bacillati</taxon>
        <taxon>Bacillota</taxon>
        <taxon>Bacilli</taxon>
        <taxon>Lactobacillales</taxon>
        <taxon>Streptococcaceae</taxon>
        <taxon>Streptococcus</taxon>
    </lineage>
</organism>
<accession>Q1JHN9</accession>
<reference key="1">
    <citation type="journal article" date="2006" name="Proc. Natl. Acad. Sci. U.S.A.">
        <title>Molecular genetic anatomy of inter- and intraserotype variation in the human bacterial pathogen group A Streptococcus.</title>
        <authorList>
            <person name="Beres S.B."/>
            <person name="Richter E.W."/>
            <person name="Nagiec M.J."/>
            <person name="Sumby P."/>
            <person name="Porcella S.F."/>
            <person name="DeLeo F.R."/>
            <person name="Musser J.M."/>
        </authorList>
    </citation>
    <scope>NUCLEOTIDE SEQUENCE [LARGE SCALE GENOMIC DNA]</scope>
    <source>
        <strain>MGAS10270</strain>
    </source>
</reference>
<keyword id="KW-0066">ATP synthesis</keyword>
<keyword id="KW-1003">Cell membrane</keyword>
<keyword id="KW-0138">CF(0)</keyword>
<keyword id="KW-0375">Hydrogen ion transport</keyword>
<keyword id="KW-0406">Ion transport</keyword>
<keyword id="KW-0472">Membrane</keyword>
<keyword id="KW-0812">Transmembrane</keyword>
<keyword id="KW-1133">Transmembrane helix</keyword>
<keyword id="KW-0813">Transport</keyword>
<comment type="function">
    <text evidence="1">F(1)F(0) ATP synthase produces ATP from ADP in the presence of a proton or sodium gradient. F-type ATPases consist of two structural domains, F(1) containing the extramembraneous catalytic core and F(0) containing the membrane proton channel, linked together by a central stalk and a peripheral stalk. During catalysis, ATP synthesis in the catalytic domain of F(1) is coupled via a rotary mechanism of the central stalk subunits to proton translocation.</text>
</comment>
<comment type="function">
    <text evidence="1">Component of the F(0) channel, it forms part of the peripheral stalk, linking F(1) to F(0).</text>
</comment>
<comment type="subunit">
    <text evidence="1">F-type ATPases have 2 components, F(1) - the catalytic core - and F(0) - the membrane proton channel. F(1) has five subunits: alpha(3), beta(3), gamma(1), delta(1), epsilon(1). F(0) has three main subunits: a(1), b(2) and c(10-14). The alpha and beta chains form an alternating ring which encloses part of the gamma chain. F(1) is attached to F(0) by a central stalk formed by the gamma and epsilon chains, while a peripheral stalk is formed by the delta and b chains.</text>
</comment>
<comment type="subcellular location">
    <subcellularLocation>
        <location evidence="1">Cell membrane</location>
        <topology evidence="1">Single-pass membrane protein</topology>
    </subcellularLocation>
</comment>
<comment type="similarity">
    <text evidence="1">Belongs to the ATPase B chain family.</text>
</comment>
<evidence type="ECO:0000255" key="1">
    <source>
        <dbReference type="HAMAP-Rule" id="MF_01398"/>
    </source>
</evidence>